<gene>
    <name evidence="6" type="primary">FLZ12</name>
    <name evidence="5" type="synonym">DUF581-1</name>
    <name evidence="8" type="ordered locus">At1g19200</name>
    <name evidence="9" type="ORF">T29M8.7</name>
</gene>
<accession>F4IE21</accession>
<accession>A0A1P8AT80</accession>
<accession>Q9LMA6</accession>
<evidence type="ECO:0000255" key="1">
    <source>
        <dbReference type="PROSITE-ProRule" id="PRU01131"/>
    </source>
</evidence>
<evidence type="ECO:0000269" key="2">
    <source>
    </source>
</evidence>
<evidence type="ECO:0000269" key="3">
    <source>
    </source>
</evidence>
<evidence type="ECO:0000269" key="4">
    <source>
    </source>
</evidence>
<evidence type="ECO:0000303" key="5">
    <source>
    </source>
</evidence>
<evidence type="ECO:0000303" key="6">
    <source>
    </source>
</evidence>
<evidence type="ECO:0000305" key="7"/>
<evidence type="ECO:0000312" key="8">
    <source>
        <dbReference type="Araport" id="AT1G19200"/>
    </source>
</evidence>
<evidence type="ECO:0000312" key="9">
    <source>
        <dbReference type="EMBL" id="AAF82231.1"/>
    </source>
</evidence>
<name>FLZ12_ARATH</name>
<comment type="function">
    <text evidence="2">May act as an adapter to facilitate the interaction of SnRK1 complex with effector proteins, conferring tissue- and stimulus-type specific differences in the SnRK1 regulation pathway.</text>
</comment>
<comment type="subunit">
    <text evidence="2 4">Interacts with KIN10 and KIN11 via its FLZ-type zinc finger domain (PubMed:24600465, PubMed:29945970). Interacts with KINB1 and KINB2 via its N-terminal part (PubMed:29945970). Forms homodimer and heterodimer with FLZ2 and FLZ10 in vitro (PubMed:29945970).</text>
</comment>
<comment type="alternative products">
    <event type="alternative splicing"/>
    <isoform>
        <id>F4IE21-1</id>
        <name>1</name>
        <sequence type="displayed"/>
    </isoform>
    <isoform>
        <id>F4IE21-2</id>
        <name>2</name>
        <sequence type="described" ref="VSP_059891"/>
    </isoform>
</comment>
<comment type="induction">
    <text evidence="3">Down-regulated by glucose and sucrose but up-regulated by mannose.</text>
</comment>
<comment type="similarity">
    <text evidence="7">Belongs to the FLZ family.</text>
</comment>
<comment type="sequence caution" evidence="7">
    <conflict type="erroneous initiation">
        <sequence resource="EMBL-CDS" id="AAF82231"/>
    </conflict>
    <text>Truncated N-terminus.</text>
</comment>
<feature type="chain" id="PRO_0000445502" description="FCS-Like Zinc finger 12">
    <location>
        <begin position="1"/>
        <end position="228"/>
    </location>
</feature>
<feature type="zinc finger region" description="FLZ-type" evidence="1">
    <location>
        <begin position="162"/>
        <end position="205"/>
    </location>
</feature>
<feature type="splice variant" id="VSP_059891" description="In isoform 2.">
    <location>
        <begin position="1"/>
        <end position="13"/>
    </location>
</feature>
<proteinExistence type="evidence at protein level"/>
<dbReference type="EMBL" id="AC069143">
    <property type="protein sequence ID" value="AAF82231.1"/>
    <property type="status" value="ALT_INIT"/>
    <property type="molecule type" value="Genomic_DNA"/>
</dbReference>
<dbReference type="EMBL" id="CP002684">
    <property type="protein sequence ID" value="ANM59837.1"/>
    <property type="molecule type" value="Genomic_DNA"/>
</dbReference>
<dbReference type="EMBL" id="CP002684">
    <property type="protein sequence ID" value="AEE29817.1"/>
    <property type="molecule type" value="Genomic_DNA"/>
</dbReference>
<dbReference type="PIR" id="E86325">
    <property type="entry name" value="E86325"/>
</dbReference>
<dbReference type="RefSeq" id="NP_001322166.1">
    <molecule id="F4IE21-1"/>
    <property type="nucleotide sequence ID" value="NM_001332387.1"/>
</dbReference>
<dbReference type="RefSeq" id="NP_173354.1">
    <molecule id="F4IE21-2"/>
    <property type="nucleotide sequence ID" value="NM_101778.2"/>
</dbReference>
<dbReference type="IntAct" id="F4IE21">
    <property type="interactions" value="1"/>
</dbReference>
<dbReference type="STRING" id="3702.F4IE21"/>
<dbReference type="PaxDb" id="3702-AT1G19200.1"/>
<dbReference type="ProteomicsDB" id="228937">
    <molecule id="F4IE21-1"/>
</dbReference>
<dbReference type="DNASU" id="838503"/>
<dbReference type="EnsemblPlants" id="AT1G19200.1">
    <molecule id="F4IE21-2"/>
    <property type="protein sequence ID" value="AT1G19200.1"/>
    <property type="gene ID" value="AT1G19200"/>
</dbReference>
<dbReference type="EnsemblPlants" id="AT1G19200.2">
    <molecule id="F4IE21-1"/>
    <property type="protein sequence ID" value="AT1G19200.2"/>
    <property type="gene ID" value="AT1G19200"/>
</dbReference>
<dbReference type="GeneID" id="838503"/>
<dbReference type="Gramene" id="AT1G19200.1">
    <molecule id="F4IE21-2"/>
    <property type="protein sequence ID" value="AT1G19200.1"/>
    <property type="gene ID" value="AT1G19200"/>
</dbReference>
<dbReference type="Gramene" id="AT1G19200.2">
    <molecule id="F4IE21-1"/>
    <property type="protein sequence ID" value="AT1G19200.2"/>
    <property type="gene ID" value="AT1G19200"/>
</dbReference>
<dbReference type="KEGG" id="ath:AT1G19200"/>
<dbReference type="Araport" id="AT1G19200"/>
<dbReference type="TAIR" id="AT1G19200"/>
<dbReference type="HOGENOM" id="CLU_103134_0_0_1"/>
<dbReference type="InParanoid" id="F4IE21"/>
<dbReference type="OMA" id="CPRRNQF"/>
<dbReference type="OrthoDB" id="1932717at2759"/>
<dbReference type="PRO" id="PR:F4IE21"/>
<dbReference type="Proteomes" id="UP000006548">
    <property type="component" value="Chromosome 1"/>
</dbReference>
<dbReference type="ExpressionAtlas" id="F4IE21">
    <property type="expression patterns" value="baseline and differential"/>
</dbReference>
<dbReference type="GO" id="GO:0019900">
    <property type="term" value="F:kinase binding"/>
    <property type="evidence" value="ECO:0000353"/>
    <property type="project" value="UniProtKB"/>
</dbReference>
<dbReference type="GO" id="GO:0008270">
    <property type="term" value="F:zinc ion binding"/>
    <property type="evidence" value="ECO:0007669"/>
    <property type="project" value="UniProtKB-KW"/>
</dbReference>
<dbReference type="GO" id="GO:0071368">
    <property type="term" value="P:cellular response to cytokinin stimulus"/>
    <property type="evidence" value="ECO:0000270"/>
    <property type="project" value="TAIR"/>
</dbReference>
<dbReference type="GO" id="GO:0009749">
    <property type="term" value="P:response to glucose"/>
    <property type="evidence" value="ECO:0000270"/>
    <property type="project" value="UniProtKB"/>
</dbReference>
<dbReference type="GO" id="GO:1905582">
    <property type="term" value="P:response to mannose"/>
    <property type="evidence" value="ECO:0000270"/>
    <property type="project" value="UniProtKB"/>
</dbReference>
<dbReference type="GO" id="GO:0009744">
    <property type="term" value="P:response to sucrose"/>
    <property type="evidence" value="ECO:0000270"/>
    <property type="project" value="UniProtKB"/>
</dbReference>
<dbReference type="InterPro" id="IPR044604">
    <property type="entry name" value="FLZ12/13/14"/>
</dbReference>
<dbReference type="InterPro" id="IPR007650">
    <property type="entry name" value="Zf-FLZ_dom"/>
</dbReference>
<dbReference type="PANTHER" id="PTHR47208:SF5">
    <property type="entry name" value="FCS-LIKE ZINC FINGER 12-RELATED"/>
    <property type="match status" value="1"/>
</dbReference>
<dbReference type="PANTHER" id="PTHR47208">
    <property type="entry name" value="OS02G0174800 PROTEIN"/>
    <property type="match status" value="1"/>
</dbReference>
<dbReference type="Pfam" id="PF04570">
    <property type="entry name" value="zf-FLZ"/>
    <property type="match status" value="1"/>
</dbReference>
<dbReference type="PROSITE" id="PS51795">
    <property type="entry name" value="ZF_FLZ"/>
    <property type="match status" value="1"/>
</dbReference>
<sequence>MLSSNPMTWKLSHMVVPGKNSTISPDYFTASQTSPLDMMKFPSPGSSKRYDNGGGIGLGIVAALEKSSIGINPVCHTGAGSKGFDLARYSKRFQFAAGIDLSDSEEYTCVTTRDGLTKVYYKEEEFEFGHNLLNGDQRWRKPIEIAEESPAKERRVLRDCPDFLTSCCLCKKKLQGKDIYMYKGDEGFCSKECRSLKIMEDSLKEQHKLTSVEVLTGEEIASPGIFLI</sequence>
<reference key="1">
    <citation type="journal article" date="2000" name="Nature">
        <title>Sequence and analysis of chromosome 1 of the plant Arabidopsis thaliana.</title>
        <authorList>
            <person name="Theologis A."/>
            <person name="Ecker J.R."/>
            <person name="Palm C.J."/>
            <person name="Federspiel N.A."/>
            <person name="Kaul S."/>
            <person name="White O."/>
            <person name="Alonso J."/>
            <person name="Altafi H."/>
            <person name="Araujo R."/>
            <person name="Bowman C.L."/>
            <person name="Brooks S.Y."/>
            <person name="Buehler E."/>
            <person name="Chan A."/>
            <person name="Chao Q."/>
            <person name="Chen H."/>
            <person name="Cheuk R.F."/>
            <person name="Chin C.W."/>
            <person name="Chung M.K."/>
            <person name="Conn L."/>
            <person name="Conway A.B."/>
            <person name="Conway A.R."/>
            <person name="Creasy T.H."/>
            <person name="Dewar K."/>
            <person name="Dunn P."/>
            <person name="Etgu P."/>
            <person name="Feldblyum T.V."/>
            <person name="Feng J.-D."/>
            <person name="Fong B."/>
            <person name="Fujii C.Y."/>
            <person name="Gill J.E."/>
            <person name="Goldsmith A.D."/>
            <person name="Haas B."/>
            <person name="Hansen N.F."/>
            <person name="Hughes B."/>
            <person name="Huizar L."/>
            <person name="Hunter J.L."/>
            <person name="Jenkins J."/>
            <person name="Johnson-Hopson C."/>
            <person name="Khan S."/>
            <person name="Khaykin E."/>
            <person name="Kim C.J."/>
            <person name="Koo H.L."/>
            <person name="Kremenetskaia I."/>
            <person name="Kurtz D.B."/>
            <person name="Kwan A."/>
            <person name="Lam B."/>
            <person name="Langin-Hooper S."/>
            <person name="Lee A."/>
            <person name="Lee J.M."/>
            <person name="Lenz C.A."/>
            <person name="Li J.H."/>
            <person name="Li Y.-P."/>
            <person name="Lin X."/>
            <person name="Liu S.X."/>
            <person name="Liu Z.A."/>
            <person name="Luros J.S."/>
            <person name="Maiti R."/>
            <person name="Marziali A."/>
            <person name="Militscher J."/>
            <person name="Miranda M."/>
            <person name="Nguyen M."/>
            <person name="Nierman W.C."/>
            <person name="Osborne B.I."/>
            <person name="Pai G."/>
            <person name="Peterson J."/>
            <person name="Pham P.K."/>
            <person name="Rizzo M."/>
            <person name="Rooney T."/>
            <person name="Rowley D."/>
            <person name="Sakano H."/>
            <person name="Salzberg S.L."/>
            <person name="Schwartz J.R."/>
            <person name="Shinn P."/>
            <person name="Southwick A.M."/>
            <person name="Sun H."/>
            <person name="Tallon L.J."/>
            <person name="Tambunga G."/>
            <person name="Toriumi M.J."/>
            <person name="Town C.D."/>
            <person name="Utterback T."/>
            <person name="Van Aken S."/>
            <person name="Vaysberg M."/>
            <person name="Vysotskaia V.S."/>
            <person name="Walker M."/>
            <person name="Wu D."/>
            <person name="Yu G."/>
            <person name="Fraser C.M."/>
            <person name="Venter J.C."/>
            <person name="Davis R.W."/>
        </authorList>
    </citation>
    <scope>NUCLEOTIDE SEQUENCE [LARGE SCALE GENOMIC DNA]</scope>
    <source>
        <strain>cv. Columbia</strain>
    </source>
</reference>
<reference key="2">
    <citation type="journal article" date="2017" name="Plant J.">
        <title>Araport11: a complete reannotation of the Arabidopsis thaliana reference genome.</title>
        <authorList>
            <person name="Cheng C.Y."/>
            <person name="Krishnakumar V."/>
            <person name="Chan A.P."/>
            <person name="Thibaud-Nissen F."/>
            <person name="Schobel S."/>
            <person name="Town C.D."/>
        </authorList>
    </citation>
    <scope>GENOME REANNOTATION</scope>
    <source>
        <strain>cv. Columbia</strain>
    </source>
</reference>
<reference key="3">
    <citation type="journal article" date="2014" name="Front. Plant Sci.">
        <title>The complex becomes more complex: protein-protein interactions of SnRK1 with DUF581 family proteins provide a framework for cell- and stimulus type-specific SnRK1 signaling in plants.</title>
        <authorList>
            <person name="Nietzsche M."/>
            <person name="Schiessl I."/>
            <person name="Boernke F."/>
        </authorList>
    </citation>
    <scope>GENE FAMILY</scope>
    <scope>INTERACTION WITH KIN10 AND KIN11</scope>
    <scope>FUNCTION</scope>
</reference>
<reference key="4">
    <citation type="journal article" date="2014" name="Front. Plant Sci.">
        <title>Corrigendum: The complex becomes more complex: protein-protein interactions of SnRK1 with DUF581 family proteins provide a framework for cell- and stimulus type-specific SnRK1 signaling in plants.</title>
        <authorList>
            <person name="Boernke F."/>
        </authorList>
    </citation>
    <scope>ERRATUM OF PUBMED:24600465</scope>
</reference>
<reference key="5">
    <citation type="journal article" date="2014" name="PLoS ONE">
        <title>DUF581 is plant specific FCS-like zinc finger involved in protein-protein interaction.</title>
        <authorList>
            <person name="Jamsheer K M."/>
            <person name="Laxmi A."/>
        </authorList>
    </citation>
    <scope>GENE FAMILY</scope>
    <scope>NOMENCLATURE</scope>
</reference>
<reference key="6">
    <citation type="journal article" date="2015" name="Front. Plant Sci.">
        <title>Expression of Arabidopsis FCS-Like Zinc finger genes is differentially regulated by sugars, cellular energy level, and abiotic stress.</title>
        <authorList>
            <person name="Jamsheer K M."/>
            <person name="Laxmi A."/>
        </authorList>
    </citation>
    <scope>INDUCTION</scope>
</reference>
<reference key="7">
    <citation type="journal article" date="2018" name="J. Biol. Chem.">
        <title>The FCS-like zinc finger scaffold of the kinase SnRK1 is formed by the coordinated actions of the FLZ domain and intrinsically disordered regions.</title>
        <authorList>
            <person name="Jamsheer K M."/>
            <person name="Shukla B.N."/>
            <person name="Jindal S."/>
            <person name="Gopan N."/>
            <person name="Mannully C.T."/>
            <person name="Laxmi A."/>
        </authorList>
    </citation>
    <scope>INTERACTION WITH KIN10; KIN11; KINB1 AND KINB2</scope>
    <scope>SUBUNIT</scope>
</reference>
<organism>
    <name type="scientific">Arabidopsis thaliana</name>
    <name type="common">Mouse-ear cress</name>
    <dbReference type="NCBI Taxonomy" id="3702"/>
    <lineage>
        <taxon>Eukaryota</taxon>
        <taxon>Viridiplantae</taxon>
        <taxon>Streptophyta</taxon>
        <taxon>Embryophyta</taxon>
        <taxon>Tracheophyta</taxon>
        <taxon>Spermatophyta</taxon>
        <taxon>Magnoliopsida</taxon>
        <taxon>eudicotyledons</taxon>
        <taxon>Gunneridae</taxon>
        <taxon>Pentapetalae</taxon>
        <taxon>rosids</taxon>
        <taxon>malvids</taxon>
        <taxon>Brassicales</taxon>
        <taxon>Brassicaceae</taxon>
        <taxon>Camelineae</taxon>
        <taxon>Arabidopsis</taxon>
    </lineage>
</organism>
<keyword id="KW-0025">Alternative splicing</keyword>
<keyword id="KW-0479">Metal-binding</keyword>
<keyword id="KW-1185">Reference proteome</keyword>
<keyword id="KW-0862">Zinc</keyword>
<keyword id="KW-0863">Zinc-finger</keyword>
<protein>
    <recommendedName>
        <fullName evidence="6">FCS-Like Zinc finger 12</fullName>
    </recommendedName>
</protein>